<sequence length="500" mass="56103">MTIFDNYEVWFVIGSQHLYGPETLRQVTQHAEHVVNALNTEAKLPCKLVLKPLGTTPDEITAICRDANYDDRCAGLVVWLHTFSPAKMWINGLTMLNKPLLQFHTQFNAALPWDSIDMDFMNLNQTAHGGREFGFIGARMRQQHAVVTGHWQDKQAHERIGSWMRQAVSKQDTRHLKVCRFGDNMREVAVTDGDKVAAQIKFGFSVNTWAVGDLVQVVNSISDGDVNALVDEYESCYTMTPATQIHGEKRQNVLEAARIELGMKRFLEQGGFHAFTTTFEDLHGLKQLPGLAVQRLMQQGYGFAGEGDWKTAALLRIMKVMSTGLQGGTSFMEDYTYHFEKGNDLVLGSHMLEVCPSIAVEEKPILDVQHLGIGGKDDPARLIFNTQTGPAIVASLIDLGDRYRLLVNCIDTVKTPHSLPKLPVANALWKAQPDLPTASEAWILAGGAHHTVFSHALNLNDMRQFAEMHDIEITVIDNDTRLPAFKDALRWNEVYYGFRR</sequence>
<feature type="chain" id="PRO_1000146227" description="L-arabinose isomerase">
    <location>
        <begin position="1"/>
        <end position="500"/>
    </location>
</feature>
<feature type="binding site" evidence="1">
    <location>
        <position position="306"/>
    </location>
    <ligand>
        <name>Mn(2+)</name>
        <dbReference type="ChEBI" id="CHEBI:29035"/>
    </ligand>
</feature>
<feature type="binding site" evidence="1">
    <location>
        <position position="333"/>
    </location>
    <ligand>
        <name>Mn(2+)</name>
        <dbReference type="ChEBI" id="CHEBI:29035"/>
    </ligand>
</feature>
<feature type="binding site" evidence="1">
    <location>
        <position position="350"/>
    </location>
    <ligand>
        <name>Mn(2+)</name>
        <dbReference type="ChEBI" id="CHEBI:29035"/>
    </ligand>
</feature>
<feature type="binding site" evidence="1">
    <location>
        <position position="450"/>
    </location>
    <ligand>
        <name>Mn(2+)</name>
        <dbReference type="ChEBI" id="CHEBI:29035"/>
    </ligand>
</feature>
<evidence type="ECO:0000255" key="1">
    <source>
        <dbReference type="HAMAP-Rule" id="MF_00519"/>
    </source>
</evidence>
<proteinExistence type="inferred from homology"/>
<comment type="function">
    <text evidence="1">Catalyzes the conversion of L-arabinose to L-ribulose.</text>
</comment>
<comment type="catalytic activity">
    <reaction evidence="1">
        <text>beta-L-arabinopyranose = L-ribulose</text>
        <dbReference type="Rhea" id="RHEA:14821"/>
        <dbReference type="ChEBI" id="CHEBI:16880"/>
        <dbReference type="ChEBI" id="CHEBI:40886"/>
        <dbReference type="EC" id="5.3.1.4"/>
    </reaction>
</comment>
<comment type="cofactor">
    <cofactor evidence="1">
        <name>Mn(2+)</name>
        <dbReference type="ChEBI" id="CHEBI:29035"/>
    </cofactor>
    <text evidence="1">Binds 1 Mn(2+) ion per subunit.</text>
</comment>
<comment type="pathway">
    <text evidence="1">Carbohydrate degradation; L-arabinose degradation via L-ribulose; D-xylulose 5-phosphate from L-arabinose (bacterial route): step 1/3.</text>
</comment>
<comment type="subunit">
    <text evidence="1">Homohexamer.</text>
</comment>
<comment type="similarity">
    <text evidence="1">Belongs to the arabinose isomerase family.</text>
</comment>
<accession>B7MNR9</accession>
<gene>
    <name evidence="1" type="primary">araA</name>
    <name type="ordered locus">ECED1_0061</name>
</gene>
<dbReference type="EC" id="5.3.1.4" evidence="1"/>
<dbReference type="EMBL" id="CU928162">
    <property type="protein sequence ID" value="CAR06284.1"/>
    <property type="molecule type" value="Genomic_DNA"/>
</dbReference>
<dbReference type="RefSeq" id="WP_000151734.1">
    <property type="nucleotide sequence ID" value="NC_011745.1"/>
</dbReference>
<dbReference type="SMR" id="B7MNR9"/>
<dbReference type="GeneID" id="93777375"/>
<dbReference type="KEGG" id="ecq:ECED1_0061"/>
<dbReference type="HOGENOM" id="CLU_045663_0_0_6"/>
<dbReference type="UniPathway" id="UPA00145">
    <property type="reaction ID" value="UER00565"/>
</dbReference>
<dbReference type="Proteomes" id="UP000000748">
    <property type="component" value="Chromosome"/>
</dbReference>
<dbReference type="GO" id="GO:0005829">
    <property type="term" value="C:cytosol"/>
    <property type="evidence" value="ECO:0007669"/>
    <property type="project" value="TreeGrafter"/>
</dbReference>
<dbReference type="GO" id="GO:0008733">
    <property type="term" value="F:L-arabinose isomerase activity"/>
    <property type="evidence" value="ECO:0007669"/>
    <property type="project" value="UniProtKB-UniRule"/>
</dbReference>
<dbReference type="GO" id="GO:0030145">
    <property type="term" value="F:manganese ion binding"/>
    <property type="evidence" value="ECO:0007669"/>
    <property type="project" value="UniProtKB-UniRule"/>
</dbReference>
<dbReference type="GO" id="GO:0019569">
    <property type="term" value="P:L-arabinose catabolic process to xylulose 5-phosphate"/>
    <property type="evidence" value="ECO:0007669"/>
    <property type="project" value="UniProtKB-UniRule"/>
</dbReference>
<dbReference type="CDD" id="cd03557">
    <property type="entry name" value="L-arabinose_isomerase"/>
    <property type="match status" value="1"/>
</dbReference>
<dbReference type="FunFam" id="3.40.50.10940:FF:000001">
    <property type="entry name" value="L-arabinose isomerase"/>
    <property type="match status" value="1"/>
</dbReference>
<dbReference type="Gene3D" id="3.40.50.10940">
    <property type="match status" value="1"/>
</dbReference>
<dbReference type="HAMAP" id="MF_00519">
    <property type="entry name" value="Arabinose_Isome"/>
    <property type="match status" value="1"/>
</dbReference>
<dbReference type="InterPro" id="IPR024664">
    <property type="entry name" value="Ara_Isoase_C"/>
</dbReference>
<dbReference type="InterPro" id="IPR055390">
    <property type="entry name" value="AraA_central"/>
</dbReference>
<dbReference type="InterPro" id="IPR055389">
    <property type="entry name" value="AraA_N"/>
</dbReference>
<dbReference type="InterPro" id="IPR038583">
    <property type="entry name" value="AraA_N_sf"/>
</dbReference>
<dbReference type="InterPro" id="IPR004216">
    <property type="entry name" value="Fuc/Ara_isomerase_C"/>
</dbReference>
<dbReference type="InterPro" id="IPR009015">
    <property type="entry name" value="Fucose_isomerase_N/cen_sf"/>
</dbReference>
<dbReference type="InterPro" id="IPR003762">
    <property type="entry name" value="Lara_isomerase"/>
</dbReference>
<dbReference type="NCBIfam" id="NF002795">
    <property type="entry name" value="PRK02929.1"/>
    <property type="match status" value="1"/>
</dbReference>
<dbReference type="PANTHER" id="PTHR38464">
    <property type="entry name" value="L-ARABINOSE ISOMERASE"/>
    <property type="match status" value="1"/>
</dbReference>
<dbReference type="PANTHER" id="PTHR38464:SF1">
    <property type="entry name" value="L-ARABINOSE ISOMERASE"/>
    <property type="match status" value="1"/>
</dbReference>
<dbReference type="Pfam" id="PF24856">
    <property type="entry name" value="AraA_central"/>
    <property type="match status" value="1"/>
</dbReference>
<dbReference type="Pfam" id="PF02610">
    <property type="entry name" value="AraA_N"/>
    <property type="match status" value="1"/>
</dbReference>
<dbReference type="Pfam" id="PF11762">
    <property type="entry name" value="Arabinose_Iso_C"/>
    <property type="match status" value="1"/>
</dbReference>
<dbReference type="PIRSF" id="PIRSF001478">
    <property type="entry name" value="L-ara_isomerase"/>
    <property type="match status" value="1"/>
</dbReference>
<dbReference type="SUPFAM" id="SSF50443">
    <property type="entry name" value="FucI/AraA C-terminal domain-like"/>
    <property type="match status" value="1"/>
</dbReference>
<dbReference type="SUPFAM" id="SSF53743">
    <property type="entry name" value="FucI/AraA N-terminal and middle domains"/>
    <property type="match status" value="1"/>
</dbReference>
<keyword id="KW-0054">Arabinose catabolism</keyword>
<keyword id="KW-0119">Carbohydrate metabolism</keyword>
<keyword id="KW-0413">Isomerase</keyword>
<keyword id="KW-0464">Manganese</keyword>
<keyword id="KW-0479">Metal-binding</keyword>
<protein>
    <recommendedName>
        <fullName evidence="1">L-arabinose isomerase</fullName>
        <ecNumber evidence="1">5.3.1.4</ecNumber>
    </recommendedName>
</protein>
<organism>
    <name type="scientific">Escherichia coli O81 (strain ED1a)</name>
    <dbReference type="NCBI Taxonomy" id="585397"/>
    <lineage>
        <taxon>Bacteria</taxon>
        <taxon>Pseudomonadati</taxon>
        <taxon>Pseudomonadota</taxon>
        <taxon>Gammaproteobacteria</taxon>
        <taxon>Enterobacterales</taxon>
        <taxon>Enterobacteriaceae</taxon>
        <taxon>Escherichia</taxon>
    </lineage>
</organism>
<reference key="1">
    <citation type="journal article" date="2009" name="PLoS Genet.">
        <title>Organised genome dynamics in the Escherichia coli species results in highly diverse adaptive paths.</title>
        <authorList>
            <person name="Touchon M."/>
            <person name="Hoede C."/>
            <person name="Tenaillon O."/>
            <person name="Barbe V."/>
            <person name="Baeriswyl S."/>
            <person name="Bidet P."/>
            <person name="Bingen E."/>
            <person name="Bonacorsi S."/>
            <person name="Bouchier C."/>
            <person name="Bouvet O."/>
            <person name="Calteau A."/>
            <person name="Chiapello H."/>
            <person name="Clermont O."/>
            <person name="Cruveiller S."/>
            <person name="Danchin A."/>
            <person name="Diard M."/>
            <person name="Dossat C."/>
            <person name="Karoui M.E."/>
            <person name="Frapy E."/>
            <person name="Garry L."/>
            <person name="Ghigo J.M."/>
            <person name="Gilles A.M."/>
            <person name="Johnson J."/>
            <person name="Le Bouguenec C."/>
            <person name="Lescat M."/>
            <person name="Mangenot S."/>
            <person name="Martinez-Jehanne V."/>
            <person name="Matic I."/>
            <person name="Nassif X."/>
            <person name="Oztas S."/>
            <person name="Petit M.A."/>
            <person name="Pichon C."/>
            <person name="Rouy Z."/>
            <person name="Ruf C.S."/>
            <person name="Schneider D."/>
            <person name="Tourret J."/>
            <person name="Vacherie B."/>
            <person name="Vallenet D."/>
            <person name="Medigue C."/>
            <person name="Rocha E.P.C."/>
            <person name="Denamur E."/>
        </authorList>
    </citation>
    <scope>NUCLEOTIDE SEQUENCE [LARGE SCALE GENOMIC DNA]</scope>
    <source>
        <strain>ED1a</strain>
    </source>
</reference>
<name>ARAA_ECO81</name>